<keyword id="KW-0002">3D-structure</keyword>
<keyword id="KW-0216">Detoxification</keyword>
<keyword id="KW-0903">Direct protein sequencing</keyword>
<keyword id="KW-0378">Hydrolase</keyword>
<evidence type="ECO:0000250" key="1"/>
<evidence type="ECO:0000255" key="2"/>
<evidence type="ECO:0000269" key="3">
    <source>
    </source>
</evidence>
<evidence type="ECO:0000305" key="4"/>
<proteinExistence type="evidence at protein level"/>
<reference key="1">
    <citation type="journal article" date="1998" name="Appl. Environ. Microbiol.">
        <title>Degradation of 1,3-dichloropropene by Pseudomonas cichorii 170.</title>
        <authorList>
            <person name="Poelarends G.J."/>
            <person name="Wilkens M."/>
            <person name="Larkin M.J."/>
            <person name="van Elsas J.D."/>
            <person name="Janssen D.B."/>
        </authorList>
    </citation>
    <scope>NUCLEOTIDE SEQUENCE [GENOMIC DNA]</scope>
    <scope>PROTEIN SEQUENCE OF 1-17</scope>
    <scope>FUNCTION</scope>
    <scope>CATALYTIC ACTIVITY</scope>
    <source>
        <strain>170</strain>
    </source>
</reference>
<reference key="2">
    <citation type="journal article" date="2000" name="J. Bacteriol.">
        <title>Roles of horizontal gene transfer and gene integration in evolution of 1,3-dichloropropene- and 1,2-dibromoethane-degradative pathways.</title>
        <authorList>
            <person name="Poelarends G.J."/>
            <person name="Kulakov L.A."/>
            <person name="Larkin M.J."/>
            <person name="van Hylckama Vlieg J.E.T."/>
            <person name="Janssen D.B."/>
        </authorList>
    </citation>
    <scope>NUCLEOTIDE SEQUENCE [GENOMIC DNA]</scope>
    <source>
        <strain>170</strain>
    </source>
</reference>
<organism>
    <name type="scientific">Pseudomonas pavonaceae</name>
    <dbReference type="NCBI Taxonomy" id="47881"/>
    <lineage>
        <taxon>Bacteria</taxon>
        <taxon>Pseudomonadati</taxon>
        <taxon>Pseudomonadota</taxon>
        <taxon>Gammaproteobacteria</taxon>
        <taxon>Pseudomonadales</taxon>
        <taxon>Pseudomonadaceae</taxon>
        <taxon>Pseudomonas</taxon>
    </lineage>
</organism>
<gene>
    <name type="primary">dhaA</name>
</gene>
<comment type="function">
    <text evidence="3">Catalyzes hydrolytic cleavage of carbon-halogen bonds in halogenated aliphatic compounds, leading to the formation of the corresponding primary alcohols, halide ions and protons. Has a broad substrate specificity, as it is able to dehalogenate mono- and di- chlorinated and brominated alkanes (up to at least C10), and the two isomers of 1,3-dichloropropene to 3-chloroallyl alcohol; the highest activity was found with 1,2-dibromoethane, while no activity was observed with the analog 1,2-dichloroethane.</text>
</comment>
<comment type="catalytic activity">
    <reaction evidence="3">
        <text>1-haloalkane + H2O = a halide anion + a primary alcohol + H(+)</text>
        <dbReference type="Rhea" id="RHEA:19081"/>
        <dbReference type="ChEBI" id="CHEBI:15377"/>
        <dbReference type="ChEBI" id="CHEBI:15378"/>
        <dbReference type="ChEBI" id="CHEBI:15734"/>
        <dbReference type="ChEBI" id="CHEBI:16042"/>
        <dbReference type="ChEBI" id="CHEBI:18060"/>
        <dbReference type="EC" id="3.8.1.5"/>
    </reaction>
</comment>
<comment type="pathway">
    <text>Xenobiotic degradation; haloalkane degradation.</text>
</comment>
<comment type="pathway">
    <text>Xenobiotic degradation; 1,3-dichloropropene degradation.</text>
</comment>
<comment type="subunit">
    <text evidence="1">Monomer.</text>
</comment>
<comment type="induction">
    <text>Constitutively expressed.</text>
</comment>
<comment type="similarity">
    <text evidence="4">Belongs to the haloalkane dehalogenase family. Type 2 subfamily.</text>
</comment>
<sequence>MSEIGTGFPFDPHYVEVLGERMHYVDVGPRDGTPVLFLHGNPTSSYLWRNIIPHVAPSHRCIAPDLIGMGKSDKPDLDYFFDDHVRYLDAFIEALGLEEVVLVIHDWGSALGFHWAKRNPERVKGIACMEFIRPIPTWDEWPEFARETFQAFRTADVGRELIIDQNAFIEGALPKCVVRPLTEVEMDHYREPFLKPVDREPLWRFPNELPIAGEPANIVALVEAYMNWLHQSPVPKLLFWGTPGVLIPPAEAARLAESLPNCKTVDIGPGLHYLQEDNPDLIGSEIARWLPAL</sequence>
<feature type="chain" id="PRO_0000216774" description="Haloalkane dehalogenase">
    <location>
        <begin position="1"/>
        <end position="293"/>
    </location>
</feature>
<feature type="domain" description="AB hydrolase-1" evidence="2">
    <location>
        <begin position="34"/>
        <end position="158"/>
    </location>
</feature>
<feature type="active site" description="Nucleophile" evidence="1">
    <location>
        <position position="106"/>
    </location>
</feature>
<feature type="active site" description="Proton donor" evidence="1">
    <location>
        <position position="130"/>
    </location>
</feature>
<feature type="active site" description="Proton acceptor" evidence="1">
    <location>
        <position position="272"/>
    </location>
</feature>
<dbReference type="EC" id="3.8.1.5" evidence="3"/>
<dbReference type="EMBL" id="AJ250371">
    <property type="protein sequence ID" value="CAB65362.1"/>
    <property type="molecule type" value="Genomic_DNA"/>
</dbReference>
<dbReference type="PDB" id="8OE2">
    <property type="method" value="X-ray"/>
    <property type="resolution" value="1.51 A"/>
    <property type="chains" value="A/B/C/D/E/F=1-293"/>
</dbReference>
<dbReference type="PDBsum" id="8OE2"/>
<dbReference type="SMR" id="P0A3G4"/>
<dbReference type="ESTHER" id="rhoso-halo1">
    <property type="family name" value="Haloalkane_dehalogenase-HLD2"/>
</dbReference>
<dbReference type="UniPathway" id="UPA00005"/>
<dbReference type="UniPathway" id="UPA00007"/>
<dbReference type="GO" id="GO:0016020">
    <property type="term" value="C:membrane"/>
    <property type="evidence" value="ECO:0007669"/>
    <property type="project" value="TreeGrafter"/>
</dbReference>
<dbReference type="GO" id="GO:0018786">
    <property type="term" value="F:haloalkane dehalogenase activity"/>
    <property type="evidence" value="ECO:0007669"/>
    <property type="project" value="UniProtKB-UniRule"/>
</dbReference>
<dbReference type="GO" id="GO:0009636">
    <property type="term" value="P:response to toxic substance"/>
    <property type="evidence" value="ECO:0007669"/>
    <property type="project" value="UniProtKB-KW"/>
</dbReference>
<dbReference type="Gene3D" id="3.40.50.1820">
    <property type="entry name" value="alpha/beta hydrolase"/>
    <property type="match status" value="1"/>
</dbReference>
<dbReference type="HAMAP" id="MF_01231">
    <property type="entry name" value="Haloalk_dehal_type2"/>
    <property type="match status" value="1"/>
</dbReference>
<dbReference type="InterPro" id="IPR000073">
    <property type="entry name" value="AB_hydrolase_1"/>
</dbReference>
<dbReference type="InterPro" id="IPR029058">
    <property type="entry name" value="AB_hydrolase_fold"/>
</dbReference>
<dbReference type="InterPro" id="IPR050266">
    <property type="entry name" value="AB_hydrolase_sf"/>
</dbReference>
<dbReference type="InterPro" id="IPR000639">
    <property type="entry name" value="Epox_hydrolase-like"/>
</dbReference>
<dbReference type="InterPro" id="IPR023594">
    <property type="entry name" value="Haloalkane_dehalogenase_2"/>
</dbReference>
<dbReference type="NCBIfam" id="NF002938">
    <property type="entry name" value="PRK03592.1"/>
    <property type="match status" value="1"/>
</dbReference>
<dbReference type="PANTHER" id="PTHR43798:SF24">
    <property type="entry name" value="CIS-3-ALKYL-4-ALKYLOXETAN-2-ONE DECARBOXYLASE"/>
    <property type="match status" value="1"/>
</dbReference>
<dbReference type="PANTHER" id="PTHR43798">
    <property type="entry name" value="MONOACYLGLYCEROL LIPASE"/>
    <property type="match status" value="1"/>
</dbReference>
<dbReference type="Pfam" id="PF00561">
    <property type="entry name" value="Abhydrolase_1"/>
    <property type="match status" value="1"/>
</dbReference>
<dbReference type="PRINTS" id="PR00412">
    <property type="entry name" value="EPOXHYDRLASE"/>
</dbReference>
<dbReference type="SUPFAM" id="SSF53474">
    <property type="entry name" value="alpha/beta-Hydrolases"/>
    <property type="match status" value="1"/>
</dbReference>
<accession>P0A3G4</accession>
<accession>Q53042</accession>
<protein>
    <recommendedName>
        <fullName>Haloalkane dehalogenase</fullName>
        <ecNumber evidence="3">3.8.1.5</ecNumber>
    </recommendedName>
</protein>
<name>DHAA_PSEPV</name>